<reference key="1">
    <citation type="submission" date="1997-11" db="EMBL/GenBank/DDBJ databases">
        <title>Sequence analysis of the Bacillus subtilis chromosome region between the terC and odhAB loci cloned in a yeast artificial chromosome.</title>
        <authorList>
            <person name="Lapidus A."/>
            <person name="Galleron N."/>
            <person name="Sorokin A."/>
            <person name="Ehrlich S.D."/>
        </authorList>
    </citation>
    <scope>NUCLEOTIDE SEQUENCE [GENOMIC DNA]</scope>
</reference>
<reference key="2">
    <citation type="journal article" date="1997" name="Nature">
        <title>The complete genome sequence of the Gram-positive bacterium Bacillus subtilis.</title>
        <authorList>
            <person name="Kunst F."/>
            <person name="Ogasawara N."/>
            <person name="Moszer I."/>
            <person name="Albertini A.M."/>
            <person name="Alloni G."/>
            <person name="Azevedo V."/>
            <person name="Bertero M.G."/>
            <person name="Bessieres P."/>
            <person name="Bolotin A."/>
            <person name="Borchert S."/>
            <person name="Borriss R."/>
            <person name="Boursier L."/>
            <person name="Brans A."/>
            <person name="Braun M."/>
            <person name="Brignell S.C."/>
            <person name="Bron S."/>
            <person name="Brouillet S."/>
            <person name="Bruschi C.V."/>
            <person name="Caldwell B."/>
            <person name="Capuano V."/>
            <person name="Carter N.M."/>
            <person name="Choi S.-K."/>
            <person name="Codani J.-J."/>
            <person name="Connerton I.F."/>
            <person name="Cummings N.J."/>
            <person name="Daniel R.A."/>
            <person name="Denizot F."/>
            <person name="Devine K.M."/>
            <person name="Duesterhoeft A."/>
            <person name="Ehrlich S.D."/>
            <person name="Emmerson P.T."/>
            <person name="Entian K.-D."/>
            <person name="Errington J."/>
            <person name="Fabret C."/>
            <person name="Ferrari E."/>
            <person name="Foulger D."/>
            <person name="Fritz C."/>
            <person name="Fujita M."/>
            <person name="Fujita Y."/>
            <person name="Fuma S."/>
            <person name="Galizzi A."/>
            <person name="Galleron N."/>
            <person name="Ghim S.-Y."/>
            <person name="Glaser P."/>
            <person name="Goffeau A."/>
            <person name="Golightly E.J."/>
            <person name="Grandi G."/>
            <person name="Guiseppi G."/>
            <person name="Guy B.J."/>
            <person name="Haga K."/>
            <person name="Haiech J."/>
            <person name="Harwood C.R."/>
            <person name="Henaut A."/>
            <person name="Hilbert H."/>
            <person name="Holsappel S."/>
            <person name="Hosono S."/>
            <person name="Hullo M.-F."/>
            <person name="Itaya M."/>
            <person name="Jones L.-M."/>
            <person name="Joris B."/>
            <person name="Karamata D."/>
            <person name="Kasahara Y."/>
            <person name="Klaerr-Blanchard M."/>
            <person name="Klein C."/>
            <person name="Kobayashi Y."/>
            <person name="Koetter P."/>
            <person name="Koningstein G."/>
            <person name="Krogh S."/>
            <person name="Kumano M."/>
            <person name="Kurita K."/>
            <person name="Lapidus A."/>
            <person name="Lardinois S."/>
            <person name="Lauber J."/>
            <person name="Lazarevic V."/>
            <person name="Lee S.-M."/>
            <person name="Levine A."/>
            <person name="Liu H."/>
            <person name="Masuda S."/>
            <person name="Mauel C."/>
            <person name="Medigue C."/>
            <person name="Medina N."/>
            <person name="Mellado R.P."/>
            <person name="Mizuno M."/>
            <person name="Moestl D."/>
            <person name="Nakai S."/>
            <person name="Noback M."/>
            <person name="Noone D."/>
            <person name="O'Reilly M."/>
            <person name="Ogawa K."/>
            <person name="Ogiwara A."/>
            <person name="Oudega B."/>
            <person name="Park S.-H."/>
            <person name="Parro V."/>
            <person name="Pohl T.M."/>
            <person name="Portetelle D."/>
            <person name="Porwollik S."/>
            <person name="Prescott A.M."/>
            <person name="Presecan E."/>
            <person name="Pujic P."/>
            <person name="Purnelle B."/>
            <person name="Rapoport G."/>
            <person name="Rey M."/>
            <person name="Reynolds S."/>
            <person name="Rieger M."/>
            <person name="Rivolta C."/>
            <person name="Rocha E."/>
            <person name="Roche B."/>
            <person name="Rose M."/>
            <person name="Sadaie Y."/>
            <person name="Sato T."/>
            <person name="Scanlan E."/>
            <person name="Schleich S."/>
            <person name="Schroeter R."/>
            <person name="Scoffone F."/>
            <person name="Sekiguchi J."/>
            <person name="Sekowska A."/>
            <person name="Seror S.J."/>
            <person name="Serror P."/>
            <person name="Shin B.-S."/>
            <person name="Soldo B."/>
            <person name="Sorokin A."/>
            <person name="Tacconi E."/>
            <person name="Takagi T."/>
            <person name="Takahashi H."/>
            <person name="Takemaru K."/>
            <person name="Takeuchi M."/>
            <person name="Tamakoshi A."/>
            <person name="Tanaka T."/>
            <person name="Terpstra P."/>
            <person name="Tognoni A."/>
            <person name="Tosato V."/>
            <person name="Uchiyama S."/>
            <person name="Vandenbol M."/>
            <person name="Vannier F."/>
            <person name="Vassarotti A."/>
            <person name="Viari A."/>
            <person name="Wambutt R."/>
            <person name="Wedler E."/>
            <person name="Wedler H."/>
            <person name="Weitzenegger T."/>
            <person name="Winters P."/>
            <person name="Wipat A."/>
            <person name="Yamamoto H."/>
            <person name="Yamane K."/>
            <person name="Yasumoto K."/>
            <person name="Yata K."/>
            <person name="Yoshida K."/>
            <person name="Yoshikawa H.-F."/>
            <person name="Zumstein E."/>
            <person name="Yoshikawa H."/>
            <person name="Danchin A."/>
        </authorList>
    </citation>
    <scope>NUCLEOTIDE SEQUENCE [LARGE SCALE GENOMIC DNA]</scope>
    <source>
        <strain>168</strain>
    </source>
</reference>
<reference key="3">
    <citation type="journal article" date="2008" name="Mol. Microbiol.">
        <title>Regulation of quinone detoxification by the thiol stress sensing DUF24/MarR-like repressor, YodB in Bacillus subtilis.</title>
        <authorList>
            <person name="Leelakriangsak M."/>
            <person name="Huyen N.T.T."/>
            <person name="Toewe S."/>
            <person name="van Duy N."/>
            <person name="Becher D."/>
            <person name="Hecker M."/>
            <person name="Antelmann H."/>
            <person name="Zuber P."/>
        </authorList>
    </citation>
    <scope>FUNCTION</scope>
    <scope>INDUCTION</scope>
    <source>
        <strain>168</strain>
    </source>
</reference>
<comment type="function">
    <text evidence="2 5">Quinone reductase that provides resistance to thiol-specific stress caused by electrophilic quinones (Probable). Contributes to resistance to 2-methylhydroquinone (2-MHQ) and catechol (PubMed:18208493).</text>
</comment>
<comment type="function">
    <text evidence="1">Also exhibits azoreductase activity. Catalyzes the reductive cleavage of the azo bond in aromatic azo compounds to the corresponding amines.</text>
</comment>
<comment type="catalytic activity">
    <reaction evidence="1">
        <text>2 a quinone + NADH + H(+) = 2 a 1,4-benzosemiquinone + NAD(+)</text>
        <dbReference type="Rhea" id="RHEA:65952"/>
        <dbReference type="ChEBI" id="CHEBI:15378"/>
        <dbReference type="ChEBI" id="CHEBI:57540"/>
        <dbReference type="ChEBI" id="CHEBI:57945"/>
        <dbReference type="ChEBI" id="CHEBI:132124"/>
        <dbReference type="ChEBI" id="CHEBI:134225"/>
    </reaction>
</comment>
<comment type="catalytic activity">
    <reaction evidence="1">
        <text>N,N-dimethyl-1,4-phenylenediamine + anthranilate + 2 NAD(+) = 2-(4-dimethylaminophenyl)diazenylbenzoate + 2 NADH + 2 H(+)</text>
        <dbReference type="Rhea" id="RHEA:55872"/>
        <dbReference type="ChEBI" id="CHEBI:15378"/>
        <dbReference type="ChEBI" id="CHEBI:15783"/>
        <dbReference type="ChEBI" id="CHEBI:16567"/>
        <dbReference type="ChEBI" id="CHEBI:57540"/>
        <dbReference type="ChEBI" id="CHEBI:57945"/>
        <dbReference type="ChEBI" id="CHEBI:71579"/>
        <dbReference type="EC" id="1.7.1.17"/>
    </reaction>
</comment>
<comment type="cofactor">
    <cofactor evidence="1">
        <name>FMN</name>
        <dbReference type="ChEBI" id="CHEBI:58210"/>
    </cofactor>
    <text evidence="1">Binds 1 FMN per subunit.</text>
</comment>
<comment type="subunit">
    <text evidence="1">Homodimer.</text>
</comment>
<comment type="induction">
    <text evidence="2">Repressed by YodB. Induced by thiol specific stress conditions, such as exposure to 2-methylhydroquinone (2-MHQ), catechol or diamide. Not induced by oxidative stress due to hydrogen peroxide.</text>
</comment>
<comment type="similarity">
    <text evidence="1 4">Belongs to the azoreductase type 1 family.</text>
</comment>
<sequence>MSTVLFVKSSDRTAEEGVSTKLYEAFLAAYKENNPNDEVVELDLHKENLPYLGRDMINGTFKAGQGMEMTEDEKKQAAIADKYLNQFVKADKVVFAFPLWNFTVPAVLHTYVDYLSRAGVTFKYTQEGPVGLMGGKKVALLNARGGVYSEGPMAALEMSLNFMKTVLGFWGVQDLHTVVIEGHNAAPDQAQEIVEKGLQEAKDLAAKF</sequence>
<evidence type="ECO:0000255" key="1">
    <source>
        <dbReference type="HAMAP-Rule" id="MF_01216"/>
    </source>
</evidence>
<evidence type="ECO:0000269" key="2">
    <source>
    </source>
</evidence>
<evidence type="ECO:0000303" key="3">
    <source>
    </source>
</evidence>
<evidence type="ECO:0000305" key="4"/>
<evidence type="ECO:0000305" key="5">
    <source>
    </source>
</evidence>
<dbReference type="EC" id="1.6.5.-" evidence="1"/>
<dbReference type="EC" id="1.7.1.17" evidence="1"/>
<dbReference type="EMBL" id="AF027868">
    <property type="protein sequence ID" value="AAB84476.1"/>
    <property type="molecule type" value="Genomic_DNA"/>
</dbReference>
<dbReference type="EMBL" id="AL009126">
    <property type="protein sequence ID" value="CAB13815.1"/>
    <property type="molecule type" value="Genomic_DNA"/>
</dbReference>
<dbReference type="PIR" id="G69901">
    <property type="entry name" value="G69901"/>
</dbReference>
<dbReference type="RefSeq" id="WP_003231260.1">
    <property type="nucleotide sequence ID" value="NZ_OZ025638.1"/>
</dbReference>
<dbReference type="SMR" id="O35022"/>
<dbReference type="FunCoup" id="O35022">
    <property type="interactions" value="25"/>
</dbReference>
<dbReference type="STRING" id="224308.BSU19230"/>
<dbReference type="jPOST" id="O35022"/>
<dbReference type="PaxDb" id="224308-BSU19230"/>
<dbReference type="EnsemblBacteria" id="CAB13815">
    <property type="protein sequence ID" value="CAB13815"/>
    <property type="gene ID" value="BSU_19230"/>
</dbReference>
<dbReference type="GeneID" id="939669"/>
<dbReference type="KEGG" id="bsu:BSU19230"/>
<dbReference type="PATRIC" id="fig|224308.179.peg.2103"/>
<dbReference type="eggNOG" id="COG1182">
    <property type="taxonomic scope" value="Bacteria"/>
</dbReference>
<dbReference type="InParanoid" id="O35022"/>
<dbReference type="OrthoDB" id="9805013at2"/>
<dbReference type="PhylomeDB" id="O35022"/>
<dbReference type="BioCyc" id="BSUB:BSU19230-MONOMER"/>
<dbReference type="Proteomes" id="UP000001570">
    <property type="component" value="Chromosome"/>
</dbReference>
<dbReference type="GO" id="GO:0009055">
    <property type="term" value="F:electron transfer activity"/>
    <property type="evidence" value="ECO:0007669"/>
    <property type="project" value="UniProtKB-UniRule"/>
</dbReference>
<dbReference type="GO" id="GO:0010181">
    <property type="term" value="F:FMN binding"/>
    <property type="evidence" value="ECO:0007669"/>
    <property type="project" value="UniProtKB-UniRule"/>
</dbReference>
<dbReference type="GO" id="GO:0016652">
    <property type="term" value="F:oxidoreductase activity, acting on NAD(P)H as acceptor"/>
    <property type="evidence" value="ECO:0007669"/>
    <property type="project" value="UniProtKB-UniRule"/>
</dbReference>
<dbReference type="GO" id="GO:0016655">
    <property type="term" value="F:oxidoreductase activity, acting on NAD(P)H, quinone or similar compound as acceptor"/>
    <property type="evidence" value="ECO:0007669"/>
    <property type="project" value="InterPro"/>
</dbReference>
<dbReference type="GO" id="GO:0009056">
    <property type="term" value="P:catabolic process"/>
    <property type="evidence" value="ECO:0007669"/>
    <property type="project" value="UniProtKB-KW"/>
</dbReference>
<dbReference type="GO" id="GO:0009636">
    <property type="term" value="P:response to toxic substance"/>
    <property type="evidence" value="ECO:0007669"/>
    <property type="project" value="UniProtKB-KW"/>
</dbReference>
<dbReference type="Gene3D" id="3.40.50.360">
    <property type="match status" value="1"/>
</dbReference>
<dbReference type="HAMAP" id="MF_01216">
    <property type="entry name" value="Azoreductase_type1"/>
    <property type="match status" value="1"/>
</dbReference>
<dbReference type="InterPro" id="IPR003680">
    <property type="entry name" value="Flavodoxin_fold"/>
</dbReference>
<dbReference type="InterPro" id="IPR029039">
    <property type="entry name" value="Flavoprotein-like_sf"/>
</dbReference>
<dbReference type="InterPro" id="IPR050104">
    <property type="entry name" value="FMN-dep_NADH:Q_OxRdtase_AzoR1"/>
</dbReference>
<dbReference type="InterPro" id="IPR023048">
    <property type="entry name" value="NADH:quinone_OxRdtase_FMN_depd"/>
</dbReference>
<dbReference type="NCBIfam" id="NF010075">
    <property type="entry name" value="PRK13556.1"/>
    <property type="match status" value="1"/>
</dbReference>
<dbReference type="PANTHER" id="PTHR43741">
    <property type="entry name" value="FMN-DEPENDENT NADH-AZOREDUCTASE 1"/>
    <property type="match status" value="1"/>
</dbReference>
<dbReference type="PANTHER" id="PTHR43741:SF4">
    <property type="entry name" value="FMN-DEPENDENT NADH:QUINONE OXIDOREDUCTASE"/>
    <property type="match status" value="1"/>
</dbReference>
<dbReference type="Pfam" id="PF02525">
    <property type="entry name" value="Flavodoxin_2"/>
    <property type="match status" value="1"/>
</dbReference>
<dbReference type="SUPFAM" id="SSF52218">
    <property type="entry name" value="Flavoproteins"/>
    <property type="match status" value="1"/>
</dbReference>
<gene>
    <name evidence="1 3" type="primary">azoR1</name>
    <name type="synonym">yocJ</name>
    <name type="ordered locus">BSU19230</name>
</gene>
<protein>
    <recommendedName>
        <fullName evidence="1 4">FMN-dependent NADH:quinone oxidoreductase 1</fullName>
        <ecNumber evidence="1">1.6.5.-</ecNumber>
    </recommendedName>
    <alternativeName>
        <fullName evidence="1">Azo-dye reductase 1</fullName>
    </alternativeName>
    <alternativeName>
        <fullName evidence="1">FMN-dependent NADH-azo compound oxidoreductase 1</fullName>
    </alternativeName>
    <alternativeName>
        <fullName evidence="1">FMN-dependent NADH-azoreductase 1</fullName>
        <ecNumber evidence="1">1.7.1.17</ecNumber>
    </alternativeName>
</protein>
<keyword id="KW-0058">Aromatic hydrocarbons catabolism</keyword>
<keyword id="KW-0216">Detoxification</keyword>
<keyword id="KW-0285">Flavoprotein</keyword>
<keyword id="KW-0288">FMN</keyword>
<keyword id="KW-0520">NAD</keyword>
<keyword id="KW-0560">Oxidoreductase</keyword>
<keyword id="KW-1185">Reference proteome</keyword>
<proteinExistence type="evidence at transcript level"/>
<organism>
    <name type="scientific">Bacillus subtilis (strain 168)</name>
    <dbReference type="NCBI Taxonomy" id="224308"/>
    <lineage>
        <taxon>Bacteria</taxon>
        <taxon>Bacillati</taxon>
        <taxon>Bacillota</taxon>
        <taxon>Bacilli</taxon>
        <taxon>Bacillales</taxon>
        <taxon>Bacillaceae</taxon>
        <taxon>Bacillus</taxon>
    </lineage>
</organism>
<name>AZOR1_BACSU</name>
<accession>O35022</accession>
<feature type="chain" id="PRO_0000166328" description="FMN-dependent NADH:quinone oxidoreductase 1">
    <location>
        <begin position="1"/>
        <end position="208"/>
    </location>
</feature>
<feature type="binding site" evidence="1">
    <location>
        <position position="10"/>
    </location>
    <ligand>
        <name>FMN</name>
        <dbReference type="ChEBI" id="CHEBI:58210"/>
    </ligand>
</feature>